<accession>Q8E6W4</accession>
<comment type="function">
    <text evidence="1">Required for the insertion and/or proper folding and/or complex formation of integral membrane proteins into the membrane. Involved in integration of membrane proteins that insert both dependently and independently of the Sec translocase complex, as well as at least some lipoproteins.</text>
</comment>
<comment type="subcellular location">
    <subcellularLocation>
        <location evidence="1">Cell membrane</location>
        <topology evidence="1">Multi-pass membrane protein</topology>
    </subcellularLocation>
</comment>
<comment type="similarity">
    <text evidence="1">Belongs to the OXA1/ALB3/YidC family. Type 2 subfamily.</text>
</comment>
<keyword id="KW-1003">Cell membrane</keyword>
<keyword id="KW-0143">Chaperone</keyword>
<keyword id="KW-0449">Lipoprotein</keyword>
<keyword id="KW-0472">Membrane</keyword>
<keyword id="KW-0564">Palmitate</keyword>
<keyword id="KW-0653">Protein transport</keyword>
<keyword id="KW-0732">Signal</keyword>
<keyword id="KW-0812">Transmembrane</keyword>
<keyword id="KW-1133">Transmembrane helix</keyword>
<keyword id="KW-0813">Transport</keyword>
<evidence type="ECO:0000255" key="1">
    <source>
        <dbReference type="HAMAP-Rule" id="MF_01811"/>
    </source>
</evidence>
<dbReference type="EMBL" id="AL766845">
    <property type="protein sequence ID" value="CAD46088.1"/>
    <property type="molecule type" value="Genomic_DNA"/>
</dbReference>
<dbReference type="RefSeq" id="WP_000727922.1">
    <property type="nucleotide sequence ID" value="NC_004368.1"/>
</dbReference>
<dbReference type="SMR" id="Q8E6W4"/>
<dbReference type="KEGG" id="san:gbs0444"/>
<dbReference type="eggNOG" id="COG0706">
    <property type="taxonomic scope" value="Bacteria"/>
</dbReference>
<dbReference type="HOGENOM" id="CLU_036138_5_0_9"/>
<dbReference type="Proteomes" id="UP000000823">
    <property type="component" value="Chromosome"/>
</dbReference>
<dbReference type="GO" id="GO:0005886">
    <property type="term" value="C:plasma membrane"/>
    <property type="evidence" value="ECO:0007669"/>
    <property type="project" value="UniProtKB-SubCell"/>
</dbReference>
<dbReference type="GO" id="GO:0032977">
    <property type="term" value="F:membrane insertase activity"/>
    <property type="evidence" value="ECO:0007669"/>
    <property type="project" value="InterPro"/>
</dbReference>
<dbReference type="GO" id="GO:0051205">
    <property type="term" value="P:protein insertion into membrane"/>
    <property type="evidence" value="ECO:0007669"/>
    <property type="project" value="TreeGrafter"/>
</dbReference>
<dbReference type="GO" id="GO:0015031">
    <property type="term" value="P:protein transport"/>
    <property type="evidence" value="ECO:0007669"/>
    <property type="project" value="UniProtKB-KW"/>
</dbReference>
<dbReference type="CDD" id="cd20070">
    <property type="entry name" value="5TM_YidC_Alb3"/>
    <property type="match status" value="1"/>
</dbReference>
<dbReference type="HAMAP" id="MF_01811">
    <property type="entry name" value="YidC_type2"/>
    <property type="match status" value="1"/>
</dbReference>
<dbReference type="InterPro" id="IPR001708">
    <property type="entry name" value="YidC/ALB3/OXA1/COX18"/>
</dbReference>
<dbReference type="InterPro" id="IPR028055">
    <property type="entry name" value="YidC/Oxa/ALB_C"/>
</dbReference>
<dbReference type="InterPro" id="IPR023060">
    <property type="entry name" value="YidC/YidC1/YidC2_Firmicutes"/>
</dbReference>
<dbReference type="InterPro" id="IPR047196">
    <property type="entry name" value="YidC_ALB_C"/>
</dbReference>
<dbReference type="NCBIfam" id="TIGR03592">
    <property type="entry name" value="yidC_oxa1_cterm"/>
    <property type="match status" value="1"/>
</dbReference>
<dbReference type="PANTHER" id="PTHR12428:SF65">
    <property type="entry name" value="CYTOCHROME C OXIDASE ASSEMBLY PROTEIN COX18, MITOCHONDRIAL"/>
    <property type="match status" value="1"/>
</dbReference>
<dbReference type="PANTHER" id="PTHR12428">
    <property type="entry name" value="OXA1"/>
    <property type="match status" value="1"/>
</dbReference>
<dbReference type="Pfam" id="PF02096">
    <property type="entry name" value="60KD_IMP"/>
    <property type="match status" value="1"/>
</dbReference>
<dbReference type="PRINTS" id="PR00701">
    <property type="entry name" value="60KDINNERMP"/>
</dbReference>
<dbReference type="PROSITE" id="PS51257">
    <property type="entry name" value="PROKAR_LIPOPROTEIN"/>
    <property type="match status" value="1"/>
</dbReference>
<sequence length="271" mass="31011">MKKKLKTFSLILLTGSLLVACGRGEVSSHSATLWEQIVYAFAKSIQWLSFNHSIGLGIILFTLIIRAIMMPLYNMQMKSSQKMQEIQPRLKELQKKYPGKDPDSRLKLNDEMQSMYKAEGVNPYASVLPLLIQLPVLWALFQALTRVSFLKVGTFLSLELSQPDPYYILPVLAALFTFLSTWLTNKAAVEKNIALTLMTYVMPFIILVTSFNFASGVVLYWTVSNAFQVFQILLLNNPYKIIKVREEAVRVAHEKEQRVKRAKRKASKKRK</sequence>
<reference key="1">
    <citation type="journal article" date="2002" name="Mol. Microbiol.">
        <title>Genome sequence of Streptococcus agalactiae, a pathogen causing invasive neonatal disease.</title>
        <authorList>
            <person name="Glaser P."/>
            <person name="Rusniok C."/>
            <person name="Buchrieser C."/>
            <person name="Chevalier F."/>
            <person name="Frangeul L."/>
            <person name="Msadek T."/>
            <person name="Zouine M."/>
            <person name="Couve E."/>
            <person name="Lalioui L."/>
            <person name="Poyart C."/>
            <person name="Trieu-Cuot P."/>
            <person name="Kunst F."/>
        </authorList>
    </citation>
    <scope>NUCLEOTIDE SEQUENCE [LARGE SCALE GENOMIC DNA]</scope>
    <source>
        <strain>NEM316</strain>
    </source>
</reference>
<name>YIDC1_STRA3</name>
<gene>
    <name evidence="1" type="primary">yidC1</name>
    <name type="ordered locus">gbs0444</name>
</gene>
<protein>
    <recommendedName>
        <fullName evidence="1">Membrane protein insertase YidC 1</fullName>
    </recommendedName>
    <alternativeName>
        <fullName evidence="1">Foldase YidC 1</fullName>
    </alternativeName>
    <alternativeName>
        <fullName evidence="1">Membrane integrase YidC 1</fullName>
    </alternativeName>
    <alternativeName>
        <fullName evidence="1">Membrane protein YidC 1</fullName>
    </alternativeName>
</protein>
<organism>
    <name type="scientific">Streptococcus agalactiae serotype III (strain NEM316)</name>
    <dbReference type="NCBI Taxonomy" id="211110"/>
    <lineage>
        <taxon>Bacteria</taxon>
        <taxon>Bacillati</taxon>
        <taxon>Bacillota</taxon>
        <taxon>Bacilli</taxon>
        <taxon>Lactobacillales</taxon>
        <taxon>Streptococcaceae</taxon>
        <taxon>Streptococcus</taxon>
    </lineage>
</organism>
<proteinExistence type="inferred from homology"/>
<feature type="signal peptide" evidence="1">
    <location>
        <begin position="1"/>
        <end position="20"/>
    </location>
</feature>
<feature type="chain" id="PRO_0000020400" description="Membrane protein insertase YidC 1">
    <location>
        <begin position="21"/>
        <end position="271"/>
    </location>
</feature>
<feature type="transmembrane region" description="Helical" evidence="1">
    <location>
        <begin position="45"/>
        <end position="65"/>
    </location>
</feature>
<feature type="transmembrane region" description="Helical" evidence="1">
    <location>
        <begin position="124"/>
        <end position="144"/>
    </location>
</feature>
<feature type="transmembrane region" description="Helical" evidence="1">
    <location>
        <begin position="163"/>
        <end position="183"/>
    </location>
</feature>
<feature type="transmembrane region" description="Helical" evidence="1">
    <location>
        <begin position="201"/>
        <end position="221"/>
    </location>
</feature>
<feature type="lipid moiety-binding region" description="N-palmitoyl cysteine" evidence="1">
    <location>
        <position position="21"/>
    </location>
</feature>
<feature type="lipid moiety-binding region" description="S-diacylglycerol cysteine" evidence="1">
    <location>
        <position position="21"/>
    </location>
</feature>